<comment type="function">
    <text evidence="1">Involved in peptide bond synthesis. Stimulates efficient translation and peptide-bond synthesis on native or reconstituted 70S ribosomes in vitro. Probably functions indirectly by altering the affinity of the ribosome for aminoacyl-tRNA, thus increasing their reactivity as acceptors for peptidyl transferase.</text>
</comment>
<comment type="pathway">
    <text evidence="1">Protein biosynthesis; polypeptide chain elongation.</text>
</comment>
<comment type="subcellular location">
    <subcellularLocation>
        <location evidence="1">Cytoplasm</location>
    </subcellularLocation>
</comment>
<comment type="similarity">
    <text evidence="1">Belongs to the elongation factor P family.</text>
</comment>
<name>EFP_CORU7</name>
<sequence>MATTADFKNGMVLMIDGKLQQIVEFQHVKPGKGPAFVRTKLKDVVSGKTVDKTFNAGVKVEQATVDRRDMTYLYNDGSAYVLMDDKTFEQVELQPELMGDGAKFLLENSRVNVSFHDGQALFAELPANVDLKIEHTDPGLQGDRSTGGSKPATLETGAEIQVPLFIETGNVVKVDTRTGEYLSRVTQ</sequence>
<evidence type="ECO:0000255" key="1">
    <source>
        <dbReference type="HAMAP-Rule" id="MF_00141"/>
    </source>
</evidence>
<proteinExistence type="inferred from homology"/>
<reference key="1">
    <citation type="journal article" date="2008" name="J. Biotechnol.">
        <title>The lifestyle of Corynebacterium urealyticum derived from its complete genome sequence established by pyrosequencing.</title>
        <authorList>
            <person name="Tauch A."/>
            <person name="Trost E."/>
            <person name="Tilker A."/>
            <person name="Ludewig U."/>
            <person name="Schneiker S."/>
            <person name="Goesmann A."/>
            <person name="Arnold W."/>
            <person name="Bekel T."/>
            <person name="Brinkrolf K."/>
            <person name="Brune I."/>
            <person name="Goetker S."/>
            <person name="Kalinowski J."/>
            <person name="Kamp P.-B."/>
            <person name="Lobo F.P."/>
            <person name="Viehoever P."/>
            <person name="Weisshaar B."/>
            <person name="Soriano F."/>
            <person name="Droege M."/>
            <person name="Puehler A."/>
        </authorList>
    </citation>
    <scope>NUCLEOTIDE SEQUENCE [LARGE SCALE GENOMIC DNA]</scope>
    <source>
        <strain>ATCC 43042 / DSM 7109</strain>
    </source>
</reference>
<protein>
    <recommendedName>
        <fullName evidence="1">Elongation factor P</fullName>
        <shortName evidence="1">EF-P</shortName>
    </recommendedName>
</protein>
<gene>
    <name evidence="1" type="primary">efp</name>
    <name type="ordered locus">cu0963</name>
</gene>
<accession>B1VDM5</accession>
<keyword id="KW-0963">Cytoplasm</keyword>
<keyword id="KW-0251">Elongation factor</keyword>
<keyword id="KW-0648">Protein biosynthesis</keyword>
<keyword id="KW-1185">Reference proteome</keyword>
<feature type="chain" id="PRO_1000096141" description="Elongation factor P">
    <location>
        <begin position="1"/>
        <end position="187"/>
    </location>
</feature>
<dbReference type="EMBL" id="AM942444">
    <property type="protein sequence ID" value="CAQ04923.1"/>
    <property type="molecule type" value="Genomic_DNA"/>
</dbReference>
<dbReference type="RefSeq" id="WP_012360211.1">
    <property type="nucleotide sequence ID" value="NC_010545.1"/>
</dbReference>
<dbReference type="SMR" id="B1VDM5"/>
<dbReference type="STRING" id="504474.cu0963"/>
<dbReference type="GeneID" id="60603742"/>
<dbReference type="KEGG" id="cur:cu0963"/>
<dbReference type="eggNOG" id="COG0231">
    <property type="taxonomic scope" value="Bacteria"/>
</dbReference>
<dbReference type="HOGENOM" id="CLU_074944_0_1_11"/>
<dbReference type="UniPathway" id="UPA00345"/>
<dbReference type="Proteomes" id="UP000001727">
    <property type="component" value="Chromosome"/>
</dbReference>
<dbReference type="GO" id="GO:0005737">
    <property type="term" value="C:cytoplasm"/>
    <property type="evidence" value="ECO:0007669"/>
    <property type="project" value="UniProtKB-SubCell"/>
</dbReference>
<dbReference type="GO" id="GO:0003746">
    <property type="term" value="F:translation elongation factor activity"/>
    <property type="evidence" value="ECO:0007669"/>
    <property type="project" value="UniProtKB-UniRule"/>
</dbReference>
<dbReference type="GO" id="GO:0043043">
    <property type="term" value="P:peptide biosynthetic process"/>
    <property type="evidence" value="ECO:0007669"/>
    <property type="project" value="InterPro"/>
</dbReference>
<dbReference type="CDD" id="cd04470">
    <property type="entry name" value="S1_EF-P_repeat_1"/>
    <property type="match status" value="1"/>
</dbReference>
<dbReference type="CDD" id="cd05794">
    <property type="entry name" value="S1_EF-P_repeat_2"/>
    <property type="match status" value="1"/>
</dbReference>
<dbReference type="FunFam" id="2.30.30.30:FF:000003">
    <property type="entry name" value="Elongation factor P"/>
    <property type="match status" value="1"/>
</dbReference>
<dbReference type="FunFam" id="2.40.50.140:FF:000004">
    <property type="entry name" value="Elongation factor P"/>
    <property type="match status" value="1"/>
</dbReference>
<dbReference type="FunFam" id="2.40.50.140:FF:000009">
    <property type="entry name" value="Elongation factor P"/>
    <property type="match status" value="1"/>
</dbReference>
<dbReference type="Gene3D" id="2.30.30.30">
    <property type="match status" value="1"/>
</dbReference>
<dbReference type="Gene3D" id="2.40.50.140">
    <property type="entry name" value="Nucleic acid-binding proteins"/>
    <property type="match status" value="2"/>
</dbReference>
<dbReference type="HAMAP" id="MF_00141">
    <property type="entry name" value="EF_P"/>
    <property type="match status" value="1"/>
</dbReference>
<dbReference type="InterPro" id="IPR015365">
    <property type="entry name" value="Elong-fact-P_C"/>
</dbReference>
<dbReference type="InterPro" id="IPR012340">
    <property type="entry name" value="NA-bd_OB-fold"/>
</dbReference>
<dbReference type="InterPro" id="IPR014722">
    <property type="entry name" value="Rib_uL2_dom2"/>
</dbReference>
<dbReference type="InterPro" id="IPR020599">
    <property type="entry name" value="Transl_elong_fac_P/YeiP"/>
</dbReference>
<dbReference type="InterPro" id="IPR013185">
    <property type="entry name" value="Transl_elong_KOW-like"/>
</dbReference>
<dbReference type="InterPro" id="IPR001059">
    <property type="entry name" value="Transl_elong_P/YeiP_cen"/>
</dbReference>
<dbReference type="InterPro" id="IPR013852">
    <property type="entry name" value="Transl_elong_P/YeiP_CS"/>
</dbReference>
<dbReference type="InterPro" id="IPR011768">
    <property type="entry name" value="Transl_elongation_fac_P"/>
</dbReference>
<dbReference type="InterPro" id="IPR008991">
    <property type="entry name" value="Translation_prot_SH3-like_sf"/>
</dbReference>
<dbReference type="NCBIfam" id="TIGR00038">
    <property type="entry name" value="efp"/>
    <property type="match status" value="1"/>
</dbReference>
<dbReference type="NCBIfam" id="NF001810">
    <property type="entry name" value="PRK00529.1"/>
    <property type="match status" value="1"/>
</dbReference>
<dbReference type="PANTHER" id="PTHR30053">
    <property type="entry name" value="ELONGATION FACTOR P"/>
    <property type="match status" value="1"/>
</dbReference>
<dbReference type="PANTHER" id="PTHR30053:SF12">
    <property type="entry name" value="ELONGATION FACTOR P (EF-P) FAMILY PROTEIN"/>
    <property type="match status" value="1"/>
</dbReference>
<dbReference type="Pfam" id="PF01132">
    <property type="entry name" value="EFP"/>
    <property type="match status" value="1"/>
</dbReference>
<dbReference type="Pfam" id="PF08207">
    <property type="entry name" value="EFP_N"/>
    <property type="match status" value="1"/>
</dbReference>
<dbReference type="Pfam" id="PF09285">
    <property type="entry name" value="Elong-fact-P_C"/>
    <property type="match status" value="1"/>
</dbReference>
<dbReference type="PIRSF" id="PIRSF005901">
    <property type="entry name" value="EF-P"/>
    <property type="match status" value="1"/>
</dbReference>
<dbReference type="SMART" id="SM01185">
    <property type="entry name" value="EFP"/>
    <property type="match status" value="1"/>
</dbReference>
<dbReference type="SMART" id="SM00841">
    <property type="entry name" value="Elong-fact-P_C"/>
    <property type="match status" value="1"/>
</dbReference>
<dbReference type="SUPFAM" id="SSF50249">
    <property type="entry name" value="Nucleic acid-binding proteins"/>
    <property type="match status" value="2"/>
</dbReference>
<dbReference type="SUPFAM" id="SSF50104">
    <property type="entry name" value="Translation proteins SH3-like domain"/>
    <property type="match status" value="1"/>
</dbReference>
<dbReference type="PROSITE" id="PS01275">
    <property type="entry name" value="EFP"/>
    <property type="match status" value="1"/>
</dbReference>
<organism>
    <name type="scientific">Corynebacterium urealyticum (strain ATCC 43042 / DSM 7109)</name>
    <dbReference type="NCBI Taxonomy" id="504474"/>
    <lineage>
        <taxon>Bacteria</taxon>
        <taxon>Bacillati</taxon>
        <taxon>Actinomycetota</taxon>
        <taxon>Actinomycetes</taxon>
        <taxon>Mycobacteriales</taxon>
        <taxon>Corynebacteriaceae</taxon>
        <taxon>Corynebacterium</taxon>
    </lineage>
</organism>